<protein>
    <recommendedName>
        <fullName evidence="1">Phospho-N-acetylmuramoyl-pentapeptide-transferase</fullName>
        <ecNumber evidence="1">2.7.8.13</ecNumber>
    </recommendedName>
    <alternativeName>
        <fullName evidence="1">UDP-MurNAc-pentapeptide phosphotransferase</fullName>
    </alternativeName>
</protein>
<gene>
    <name evidence="1" type="primary">mraY</name>
    <name type="ordered locus">RrIowa_1081</name>
</gene>
<evidence type="ECO:0000255" key="1">
    <source>
        <dbReference type="HAMAP-Rule" id="MF_00038"/>
    </source>
</evidence>
<comment type="function">
    <text evidence="1">Catalyzes the initial step of the lipid cycle reactions in the biosynthesis of the cell wall peptidoglycan: transfers peptidoglycan precursor phospho-MurNAc-pentapeptide from UDP-MurNAc-pentapeptide onto the lipid carrier undecaprenyl phosphate, yielding undecaprenyl-pyrophosphoryl-MurNAc-pentapeptide, known as lipid I.</text>
</comment>
<comment type="catalytic activity">
    <reaction evidence="1">
        <text>UDP-N-acetyl-alpha-D-muramoyl-L-alanyl-gamma-D-glutamyl-meso-2,6-diaminopimeloyl-D-alanyl-D-alanine + di-trans,octa-cis-undecaprenyl phosphate = di-trans,octa-cis-undecaprenyl diphospho-N-acetyl-alpha-D-muramoyl-L-alanyl-D-glutamyl-meso-2,6-diaminopimeloyl-D-alanyl-D-alanine + UMP</text>
        <dbReference type="Rhea" id="RHEA:28386"/>
        <dbReference type="ChEBI" id="CHEBI:57865"/>
        <dbReference type="ChEBI" id="CHEBI:60392"/>
        <dbReference type="ChEBI" id="CHEBI:61386"/>
        <dbReference type="ChEBI" id="CHEBI:61387"/>
        <dbReference type="EC" id="2.7.8.13"/>
    </reaction>
</comment>
<comment type="cofactor">
    <cofactor evidence="1">
        <name>Mg(2+)</name>
        <dbReference type="ChEBI" id="CHEBI:18420"/>
    </cofactor>
</comment>
<comment type="pathway">
    <text evidence="1">Cell wall biogenesis; peptidoglycan biosynthesis.</text>
</comment>
<comment type="subcellular location">
    <subcellularLocation>
        <location evidence="1">Cell inner membrane</location>
        <topology evidence="1">Multi-pass membrane protein</topology>
    </subcellularLocation>
</comment>
<comment type="similarity">
    <text evidence="1">Belongs to the glycosyltransferase 4 family. MraY subfamily.</text>
</comment>
<keyword id="KW-0131">Cell cycle</keyword>
<keyword id="KW-0132">Cell division</keyword>
<keyword id="KW-0997">Cell inner membrane</keyword>
<keyword id="KW-1003">Cell membrane</keyword>
<keyword id="KW-0133">Cell shape</keyword>
<keyword id="KW-0961">Cell wall biogenesis/degradation</keyword>
<keyword id="KW-0460">Magnesium</keyword>
<keyword id="KW-0472">Membrane</keyword>
<keyword id="KW-0479">Metal-binding</keyword>
<keyword id="KW-0573">Peptidoglycan synthesis</keyword>
<keyword id="KW-0808">Transferase</keyword>
<keyword id="KW-0812">Transmembrane</keyword>
<keyword id="KW-1133">Transmembrane helix</keyword>
<organism>
    <name type="scientific">Rickettsia rickettsii (strain Iowa)</name>
    <dbReference type="NCBI Taxonomy" id="452659"/>
    <lineage>
        <taxon>Bacteria</taxon>
        <taxon>Pseudomonadati</taxon>
        <taxon>Pseudomonadota</taxon>
        <taxon>Alphaproteobacteria</taxon>
        <taxon>Rickettsiales</taxon>
        <taxon>Rickettsiaceae</taxon>
        <taxon>Rickettsieae</taxon>
        <taxon>Rickettsia</taxon>
        <taxon>spotted fever group</taxon>
    </lineage>
</organism>
<dbReference type="EC" id="2.7.8.13" evidence="1"/>
<dbReference type="EMBL" id="CP000766">
    <property type="protein sequence ID" value="ABY72876.1"/>
    <property type="molecule type" value="Genomic_DNA"/>
</dbReference>
<dbReference type="RefSeq" id="WP_012151071.1">
    <property type="nucleotide sequence ID" value="NC_010263.3"/>
</dbReference>
<dbReference type="SMR" id="B0BYF0"/>
<dbReference type="GeneID" id="79937589"/>
<dbReference type="KEGG" id="rrj:RrIowa_1081"/>
<dbReference type="eggNOG" id="COG0472">
    <property type="taxonomic scope" value="Bacteria"/>
</dbReference>
<dbReference type="HOGENOM" id="CLU_023982_0_0_5"/>
<dbReference type="UniPathway" id="UPA00219"/>
<dbReference type="Proteomes" id="UP000000796">
    <property type="component" value="Chromosome"/>
</dbReference>
<dbReference type="GO" id="GO:0005886">
    <property type="term" value="C:plasma membrane"/>
    <property type="evidence" value="ECO:0007669"/>
    <property type="project" value="UniProtKB-SubCell"/>
</dbReference>
<dbReference type="GO" id="GO:0046872">
    <property type="term" value="F:metal ion binding"/>
    <property type="evidence" value="ECO:0007669"/>
    <property type="project" value="UniProtKB-KW"/>
</dbReference>
<dbReference type="GO" id="GO:0008963">
    <property type="term" value="F:phospho-N-acetylmuramoyl-pentapeptide-transferase activity"/>
    <property type="evidence" value="ECO:0007669"/>
    <property type="project" value="UniProtKB-UniRule"/>
</dbReference>
<dbReference type="GO" id="GO:0051992">
    <property type="term" value="F:UDP-N-acetylmuramoyl-L-alanyl-D-glutamyl-meso-2,6-diaminopimelyl-D-alanyl-D-alanine:undecaprenyl-phosphate transferase activity"/>
    <property type="evidence" value="ECO:0007669"/>
    <property type="project" value="RHEA"/>
</dbReference>
<dbReference type="GO" id="GO:0051301">
    <property type="term" value="P:cell division"/>
    <property type="evidence" value="ECO:0007669"/>
    <property type="project" value="UniProtKB-KW"/>
</dbReference>
<dbReference type="GO" id="GO:0071555">
    <property type="term" value="P:cell wall organization"/>
    <property type="evidence" value="ECO:0007669"/>
    <property type="project" value="UniProtKB-KW"/>
</dbReference>
<dbReference type="GO" id="GO:0009252">
    <property type="term" value="P:peptidoglycan biosynthetic process"/>
    <property type="evidence" value="ECO:0007669"/>
    <property type="project" value="UniProtKB-UniRule"/>
</dbReference>
<dbReference type="GO" id="GO:0008360">
    <property type="term" value="P:regulation of cell shape"/>
    <property type="evidence" value="ECO:0007669"/>
    <property type="project" value="UniProtKB-KW"/>
</dbReference>
<dbReference type="CDD" id="cd06852">
    <property type="entry name" value="GT_MraY"/>
    <property type="match status" value="1"/>
</dbReference>
<dbReference type="HAMAP" id="MF_00038">
    <property type="entry name" value="MraY"/>
    <property type="match status" value="1"/>
</dbReference>
<dbReference type="InterPro" id="IPR000715">
    <property type="entry name" value="Glycosyl_transferase_4"/>
</dbReference>
<dbReference type="InterPro" id="IPR003524">
    <property type="entry name" value="PNAcMuramoyl-5peptid_Trfase"/>
</dbReference>
<dbReference type="InterPro" id="IPR018480">
    <property type="entry name" value="PNAcMuramoyl-5peptid_Trfase_CS"/>
</dbReference>
<dbReference type="NCBIfam" id="TIGR00445">
    <property type="entry name" value="mraY"/>
    <property type="match status" value="1"/>
</dbReference>
<dbReference type="PANTHER" id="PTHR22926">
    <property type="entry name" value="PHOSPHO-N-ACETYLMURAMOYL-PENTAPEPTIDE-TRANSFERASE"/>
    <property type="match status" value="1"/>
</dbReference>
<dbReference type="PANTHER" id="PTHR22926:SF5">
    <property type="entry name" value="PHOSPHO-N-ACETYLMURAMOYL-PENTAPEPTIDE-TRANSFERASE HOMOLOG"/>
    <property type="match status" value="1"/>
</dbReference>
<dbReference type="Pfam" id="PF00953">
    <property type="entry name" value="Glycos_transf_4"/>
    <property type="match status" value="1"/>
</dbReference>
<dbReference type="PROSITE" id="PS01347">
    <property type="entry name" value="MRAY_1"/>
    <property type="match status" value="1"/>
</dbReference>
<dbReference type="PROSITE" id="PS01348">
    <property type="entry name" value="MRAY_2"/>
    <property type="match status" value="1"/>
</dbReference>
<proteinExistence type="inferred from homology"/>
<reference key="1">
    <citation type="journal article" date="2008" name="Infect. Immun.">
        <title>Genomic comparison of virulent Rickettsia rickettsii Sheila Smith and avirulent Rickettsia rickettsii Iowa.</title>
        <authorList>
            <person name="Ellison D.W."/>
            <person name="Clark T.R."/>
            <person name="Sturdevant D.E."/>
            <person name="Virtaneva K."/>
            <person name="Porcella S.F."/>
            <person name="Hackstadt T."/>
        </authorList>
    </citation>
    <scope>NUCLEOTIDE SEQUENCE [LARGE SCALE GENOMIC DNA]</scope>
    <source>
        <strain>Iowa</strain>
    </source>
</reference>
<sequence length="361" mass="39624">MLYNLLLPHIHNSHIANLFHYITFRSGLAIIITLSLSFITGPILIEFLRSIQKNGQPIRSDGPESHQTKVGTPTMGGIMIILSSCLSTLLLADLTNKYIWITLFGFISFGIIGFMDDYAKVTKNNHYGVRGKSKLLLQGIISVIICVLLEYLDKSPSHLLNVPFFKNLSLDLGYCYIVFAIFVIVGSSNAVNLTDGLDGLATVPIAFTAGSFALISYLVGNLIYSNYLQLTYIPNTGELTVLCAGLVGSCLGFLWFNAQPAEVFMGDTGSLSLGGVLGIISVITKHEIVLAIVGGLFVIETASVILQVYYFKATKGKRIFKMAPLHHHFEKHGWAESKVVIRFWIISVIFALIGLSSLKLR</sequence>
<feature type="chain" id="PRO_1000074555" description="Phospho-N-acetylmuramoyl-pentapeptide-transferase">
    <location>
        <begin position="1"/>
        <end position="361"/>
    </location>
</feature>
<feature type="transmembrane region" description="Helical" evidence="1">
    <location>
        <begin position="28"/>
        <end position="48"/>
    </location>
</feature>
<feature type="transmembrane region" description="Helical" evidence="1">
    <location>
        <begin position="74"/>
        <end position="94"/>
    </location>
</feature>
<feature type="transmembrane region" description="Helical" evidence="1">
    <location>
        <begin position="99"/>
        <end position="119"/>
    </location>
</feature>
<feature type="transmembrane region" description="Helical" evidence="1">
    <location>
        <begin position="133"/>
        <end position="153"/>
    </location>
</feature>
<feature type="transmembrane region" description="Helical" evidence="1">
    <location>
        <begin position="168"/>
        <end position="188"/>
    </location>
</feature>
<feature type="transmembrane region" description="Helical" evidence="1">
    <location>
        <begin position="203"/>
        <end position="223"/>
    </location>
</feature>
<feature type="transmembrane region" description="Helical" evidence="1">
    <location>
        <begin position="236"/>
        <end position="256"/>
    </location>
</feature>
<feature type="transmembrane region" description="Helical" evidence="1">
    <location>
        <begin position="263"/>
        <end position="283"/>
    </location>
</feature>
<feature type="transmembrane region" description="Helical" evidence="1">
    <location>
        <begin position="288"/>
        <end position="308"/>
    </location>
</feature>
<feature type="transmembrane region" description="Helical" evidence="1">
    <location>
        <begin position="338"/>
        <end position="358"/>
    </location>
</feature>
<name>MRAY_RICRO</name>
<accession>B0BYF0</accession>